<gene>
    <name type="primary">fah</name>
    <name type="ORF">DDB_G0271094</name>
</gene>
<comment type="catalytic activity">
    <reaction evidence="2">
        <text>4-fumarylacetoacetate + H2O = acetoacetate + fumarate + H(+)</text>
        <dbReference type="Rhea" id="RHEA:10244"/>
        <dbReference type="ChEBI" id="CHEBI:13705"/>
        <dbReference type="ChEBI" id="CHEBI:15377"/>
        <dbReference type="ChEBI" id="CHEBI:15378"/>
        <dbReference type="ChEBI" id="CHEBI:18034"/>
        <dbReference type="ChEBI" id="CHEBI:29806"/>
        <dbReference type="EC" id="3.7.1.2"/>
    </reaction>
</comment>
<comment type="cofactor">
    <cofactor evidence="2">
        <name>Ca(2+)</name>
        <dbReference type="ChEBI" id="CHEBI:29108"/>
    </cofactor>
</comment>
<comment type="cofactor">
    <cofactor evidence="2">
        <name>Mg(2+)</name>
        <dbReference type="ChEBI" id="CHEBI:18420"/>
    </cofactor>
</comment>
<comment type="pathway">
    <text>Amino-acid degradation; L-phenylalanine degradation; acetoacetate and fumarate from L-phenylalanine: step 6/6.</text>
</comment>
<comment type="similarity">
    <text evidence="3">Belongs to the FAH family.</text>
</comment>
<sequence>MSILKSFIEVSEDSHFPIQNLPYGVFKPTLNDQARIGVAIGDFVCDLSVLADLKLFDGKLKDTKVFHQENLNSFMSLGKELWSEARKTIQNLLSSETSTIRDNKEYREKIFHSISSVTMLLPARIGDYTDFYASKEHATNVGIMFRGKENALMPNWVHLPVGYHGRSSSIVVSGTPLKRPWGQTKSDEPDSLPTFNPCRLLDFELEMGALIGGESTKLGEPISIESAKDHIFGLVLLNDWSARDIQKWEYVPLGPFLAKNFGSTISPWVVTMEALQPFATKPPTQDPQPMKYLQEQGNTTFDIELSVSIKSPKMSKPHKVSTSNLKYMYWTLTQQLAHHTVNGCNMNAGDLLGTGTISGPTEDSYGSMLELSWKGSKVVSLGTETNEERKFIQDGDSVILSGLCKGNGYQIGFGNCEGTILPADKRQ</sequence>
<organism>
    <name type="scientific">Dictyostelium discoideum</name>
    <name type="common">Social amoeba</name>
    <dbReference type="NCBI Taxonomy" id="44689"/>
    <lineage>
        <taxon>Eukaryota</taxon>
        <taxon>Amoebozoa</taxon>
        <taxon>Evosea</taxon>
        <taxon>Eumycetozoa</taxon>
        <taxon>Dictyostelia</taxon>
        <taxon>Dictyosteliales</taxon>
        <taxon>Dictyosteliaceae</taxon>
        <taxon>Dictyostelium</taxon>
    </lineage>
</organism>
<protein>
    <recommendedName>
        <fullName>Fumarylacetoacetase</fullName>
        <shortName>FAA</shortName>
        <ecNumber evidence="2">3.7.1.2</ecNumber>
    </recommendedName>
    <alternativeName>
        <fullName>Beta-diketonase</fullName>
    </alternativeName>
    <alternativeName>
        <fullName>Fumarylacetoacetate hydrolase</fullName>
    </alternativeName>
</protein>
<dbReference type="EC" id="3.7.1.2" evidence="2"/>
<dbReference type="EMBL" id="AAFI02000005">
    <property type="protein sequence ID" value="EAS66937.1"/>
    <property type="molecule type" value="Genomic_DNA"/>
</dbReference>
<dbReference type="RefSeq" id="XP_001134473.1">
    <property type="nucleotide sequence ID" value="XM_001134473.1"/>
</dbReference>
<dbReference type="SMR" id="Q1ZXQ1"/>
<dbReference type="FunCoup" id="Q1ZXQ1">
    <property type="interactions" value="47"/>
</dbReference>
<dbReference type="STRING" id="44689.Q1ZXQ1"/>
<dbReference type="PaxDb" id="44689-DDB0231609"/>
<dbReference type="EnsemblProtists" id="EAS66937">
    <property type="protein sequence ID" value="EAS66937"/>
    <property type="gene ID" value="DDB_G0271094"/>
</dbReference>
<dbReference type="GeneID" id="8617161"/>
<dbReference type="KEGG" id="ddi:DDB_G0271094"/>
<dbReference type="dictyBase" id="DDB_G0271094">
    <property type="gene designation" value="fah"/>
</dbReference>
<dbReference type="VEuPathDB" id="AmoebaDB:DDB_G0271094"/>
<dbReference type="eggNOG" id="KOG2843">
    <property type="taxonomic scope" value="Eukaryota"/>
</dbReference>
<dbReference type="HOGENOM" id="CLU_026207_2_0_1"/>
<dbReference type="InParanoid" id="Q1ZXQ1"/>
<dbReference type="OMA" id="YWTAAQQ"/>
<dbReference type="PhylomeDB" id="Q1ZXQ1"/>
<dbReference type="Reactome" id="R-DDI-8963684">
    <property type="pathway name" value="Tyrosine catabolism"/>
</dbReference>
<dbReference type="UniPathway" id="UPA00139">
    <property type="reaction ID" value="UER00341"/>
</dbReference>
<dbReference type="PRO" id="PR:Q1ZXQ1"/>
<dbReference type="Proteomes" id="UP000002195">
    <property type="component" value="Chromosome 1"/>
</dbReference>
<dbReference type="GO" id="GO:0004334">
    <property type="term" value="F:fumarylacetoacetase activity"/>
    <property type="evidence" value="ECO:0000318"/>
    <property type="project" value="GO_Central"/>
</dbReference>
<dbReference type="GO" id="GO:0046872">
    <property type="term" value="F:metal ion binding"/>
    <property type="evidence" value="ECO:0007669"/>
    <property type="project" value="UniProtKB-KW"/>
</dbReference>
<dbReference type="GO" id="GO:1902000">
    <property type="term" value="P:homogentisate catabolic process"/>
    <property type="evidence" value="ECO:0000318"/>
    <property type="project" value="GO_Central"/>
</dbReference>
<dbReference type="GO" id="GO:0006559">
    <property type="term" value="P:L-phenylalanine catabolic process"/>
    <property type="evidence" value="ECO:0000318"/>
    <property type="project" value="GO_Central"/>
</dbReference>
<dbReference type="GO" id="GO:0006572">
    <property type="term" value="P:tyrosine catabolic process"/>
    <property type="evidence" value="ECO:0000318"/>
    <property type="project" value="GO_Central"/>
</dbReference>
<dbReference type="FunFam" id="2.30.30.230:FF:000001">
    <property type="entry name" value="Fumarylacetoacetase"/>
    <property type="match status" value="1"/>
</dbReference>
<dbReference type="FunFam" id="3.90.850.10:FF:000004">
    <property type="entry name" value="Fumarylacetoacetase"/>
    <property type="match status" value="1"/>
</dbReference>
<dbReference type="Gene3D" id="2.30.30.230">
    <property type="entry name" value="Fumarylacetoacetase, N-terminal domain"/>
    <property type="match status" value="1"/>
</dbReference>
<dbReference type="Gene3D" id="3.90.850.10">
    <property type="entry name" value="Fumarylacetoacetase-like, C-terminal domain"/>
    <property type="match status" value="1"/>
</dbReference>
<dbReference type="InterPro" id="IPR005959">
    <property type="entry name" value="Fumarylacetoacetase"/>
</dbReference>
<dbReference type="InterPro" id="IPR011234">
    <property type="entry name" value="Fumarylacetoacetase-like_C"/>
</dbReference>
<dbReference type="InterPro" id="IPR036663">
    <property type="entry name" value="Fumarylacetoacetase_C_sf"/>
</dbReference>
<dbReference type="InterPro" id="IPR015377">
    <property type="entry name" value="Fumarylacetoacetase_N"/>
</dbReference>
<dbReference type="InterPro" id="IPR036462">
    <property type="entry name" value="Fumarylacetoacetase_N_sf"/>
</dbReference>
<dbReference type="NCBIfam" id="TIGR01266">
    <property type="entry name" value="fum_ac_acetase"/>
    <property type="match status" value="1"/>
</dbReference>
<dbReference type="PANTHER" id="PTHR43069">
    <property type="entry name" value="FUMARYLACETOACETASE"/>
    <property type="match status" value="1"/>
</dbReference>
<dbReference type="PANTHER" id="PTHR43069:SF2">
    <property type="entry name" value="FUMARYLACETOACETASE"/>
    <property type="match status" value="1"/>
</dbReference>
<dbReference type="Pfam" id="PF01557">
    <property type="entry name" value="FAA_hydrolase"/>
    <property type="match status" value="1"/>
</dbReference>
<dbReference type="Pfam" id="PF09298">
    <property type="entry name" value="FAA_hydrolase_N"/>
    <property type="match status" value="1"/>
</dbReference>
<dbReference type="SUPFAM" id="SSF56529">
    <property type="entry name" value="FAH"/>
    <property type="match status" value="1"/>
</dbReference>
<dbReference type="SUPFAM" id="SSF63433">
    <property type="entry name" value="Fumarylacetoacetate hydrolase, FAH, N-terminal domain"/>
    <property type="match status" value="1"/>
</dbReference>
<feature type="chain" id="PRO_0000318805" description="Fumarylacetoacetase">
    <location>
        <begin position="1"/>
        <end position="427"/>
    </location>
</feature>
<feature type="active site" description="Proton acceptor" evidence="2">
    <location>
        <position position="137"/>
    </location>
</feature>
<feature type="binding site" evidence="2">
    <location>
        <position position="130"/>
    </location>
    <ligand>
        <name>Ca(2+)</name>
        <dbReference type="ChEBI" id="CHEBI:29108"/>
    </ligand>
</feature>
<feature type="binding site" evidence="2">
    <location>
        <position position="132"/>
    </location>
    <ligand>
        <name>substrate</name>
    </ligand>
</feature>
<feature type="binding site" evidence="2">
    <location>
        <position position="146"/>
    </location>
    <ligand>
        <name>substrate</name>
    </ligand>
</feature>
<feature type="binding site" evidence="2">
    <location>
        <position position="204"/>
    </location>
    <ligand>
        <name>Ca(2+)</name>
        <dbReference type="ChEBI" id="CHEBI:29108"/>
    </ligand>
</feature>
<feature type="binding site" evidence="2">
    <location>
        <position position="206"/>
    </location>
    <ligand>
        <name>Ca(2+)</name>
        <dbReference type="ChEBI" id="CHEBI:29108"/>
    </ligand>
</feature>
<feature type="binding site" evidence="2">
    <location>
        <position position="239"/>
    </location>
    <ligand>
        <name>Ca(2+)</name>
        <dbReference type="ChEBI" id="CHEBI:29108"/>
    </ligand>
</feature>
<feature type="binding site" evidence="2">
    <location>
        <position position="239"/>
    </location>
    <ligand>
        <name>Mg(2+)</name>
        <dbReference type="ChEBI" id="CHEBI:18420"/>
    </ligand>
</feature>
<feature type="binding site" evidence="2">
    <location>
        <position position="246"/>
    </location>
    <ligand>
        <name>substrate</name>
    </ligand>
</feature>
<feature type="binding site" evidence="2">
    <location>
        <position position="250"/>
    </location>
    <ligand>
        <name>substrate</name>
    </ligand>
</feature>
<feature type="binding site" evidence="2">
    <location>
        <position position="259"/>
    </location>
    <ligand>
        <name>Mg(2+)</name>
        <dbReference type="ChEBI" id="CHEBI:18420"/>
    </ligand>
</feature>
<feature type="binding site" evidence="1">
    <location>
        <position position="263"/>
    </location>
    <ligand>
        <name>Mg(2+)</name>
        <dbReference type="ChEBI" id="CHEBI:18420"/>
    </ligand>
</feature>
<feature type="binding site" evidence="2">
    <location>
        <position position="356"/>
    </location>
    <ligand>
        <name>substrate</name>
    </ligand>
</feature>
<reference key="1">
    <citation type="journal article" date="2005" name="Nature">
        <title>The genome of the social amoeba Dictyostelium discoideum.</title>
        <authorList>
            <person name="Eichinger L."/>
            <person name="Pachebat J.A."/>
            <person name="Gloeckner G."/>
            <person name="Rajandream M.A."/>
            <person name="Sucgang R."/>
            <person name="Berriman M."/>
            <person name="Song J."/>
            <person name="Olsen R."/>
            <person name="Szafranski K."/>
            <person name="Xu Q."/>
            <person name="Tunggal B."/>
            <person name="Kummerfeld S."/>
            <person name="Madera M."/>
            <person name="Konfortov B.A."/>
            <person name="Rivero F."/>
            <person name="Bankier A.T."/>
            <person name="Lehmann R."/>
            <person name="Hamlin N."/>
            <person name="Davies R."/>
            <person name="Gaudet P."/>
            <person name="Fey P."/>
            <person name="Pilcher K."/>
            <person name="Chen G."/>
            <person name="Saunders D."/>
            <person name="Sodergren E.J."/>
            <person name="Davis P."/>
            <person name="Kerhornou A."/>
            <person name="Nie X."/>
            <person name="Hall N."/>
            <person name="Anjard C."/>
            <person name="Hemphill L."/>
            <person name="Bason N."/>
            <person name="Farbrother P."/>
            <person name="Desany B."/>
            <person name="Just E."/>
            <person name="Morio T."/>
            <person name="Rost R."/>
            <person name="Churcher C.M."/>
            <person name="Cooper J."/>
            <person name="Haydock S."/>
            <person name="van Driessche N."/>
            <person name="Cronin A."/>
            <person name="Goodhead I."/>
            <person name="Muzny D.M."/>
            <person name="Mourier T."/>
            <person name="Pain A."/>
            <person name="Lu M."/>
            <person name="Harper D."/>
            <person name="Lindsay R."/>
            <person name="Hauser H."/>
            <person name="James K.D."/>
            <person name="Quiles M."/>
            <person name="Madan Babu M."/>
            <person name="Saito T."/>
            <person name="Buchrieser C."/>
            <person name="Wardroper A."/>
            <person name="Felder M."/>
            <person name="Thangavelu M."/>
            <person name="Johnson D."/>
            <person name="Knights A."/>
            <person name="Loulseged H."/>
            <person name="Mungall K.L."/>
            <person name="Oliver K."/>
            <person name="Price C."/>
            <person name="Quail M.A."/>
            <person name="Urushihara H."/>
            <person name="Hernandez J."/>
            <person name="Rabbinowitsch E."/>
            <person name="Steffen D."/>
            <person name="Sanders M."/>
            <person name="Ma J."/>
            <person name="Kohara Y."/>
            <person name="Sharp S."/>
            <person name="Simmonds M.N."/>
            <person name="Spiegler S."/>
            <person name="Tivey A."/>
            <person name="Sugano S."/>
            <person name="White B."/>
            <person name="Walker D."/>
            <person name="Woodward J.R."/>
            <person name="Winckler T."/>
            <person name="Tanaka Y."/>
            <person name="Shaulsky G."/>
            <person name="Schleicher M."/>
            <person name="Weinstock G.M."/>
            <person name="Rosenthal A."/>
            <person name="Cox E.C."/>
            <person name="Chisholm R.L."/>
            <person name="Gibbs R.A."/>
            <person name="Loomis W.F."/>
            <person name="Platzer M."/>
            <person name="Kay R.R."/>
            <person name="Williams J.G."/>
            <person name="Dear P.H."/>
            <person name="Noegel A.A."/>
            <person name="Barrell B.G."/>
            <person name="Kuspa A."/>
        </authorList>
    </citation>
    <scope>NUCLEOTIDE SEQUENCE [LARGE SCALE GENOMIC DNA]</scope>
    <source>
        <strain>AX4</strain>
    </source>
</reference>
<accession>Q1ZXQ1</accession>
<name>FAAA_DICDI</name>
<proteinExistence type="inferred from homology"/>
<evidence type="ECO:0000250" key="1"/>
<evidence type="ECO:0000250" key="2">
    <source>
        <dbReference type="UniProtKB" id="P35505"/>
    </source>
</evidence>
<evidence type="ECO:0000305" key="3"/>
<keyword id="KW-0106">Calcium</keyword>
<keyword id="KW-0378">Hydrolase</keyword>
<keyword id="KW-0460">Magnesium</keyword>
<keyword id="KW-0479">Metal-binding</keyword>
<keyword id="KW-0585">Phenylalanine catabolism</keyword>
<keyword id="KW-1185">Reference proteome</keyword>
<keyword id="KW-0828">Tyrosine catabolism</keyword>